<organism>
    <name type="scientific">Methanococcus maripaludis</name>
    <name type="common">Methanococcus deltae</name>
    <dbReference type="NCBI Taxonomy" id="39152"/>
    <lineage>
        <taxon>Archaea</taxon>
        <taxon>Methanobacteriati</taxon>
        <taxon>Methanobacteriota</taxon>
        <taxon>Methanomada group</taxon>
        <taxon>Methanococci</taxon>
        <taxon>Methanococcales</taxon>
        <taxon>Methanococcaceae</taxon>
        <taxon>Methanococcus</taxon>
    </lineage>
</organism>
<accession>P0CW42</accession>
<accession>O31112</accession>
<feature type="chain" id="PRO_0000144195" description="Tungsten-containing formylmethanofuran dehydrogenase 2 subunit C">
    <location>
        <begin position="1"/>
        <end position="272"/>
    </location>
</feature>
<feature type="repeat" description="1">
    <location>
        <begin position="77"/>
        <end position="89"/>
    </location>
</feature>
<feature type="repeat" description="2">
    <location>
        <begin position="96"/>
        <end position="108"/>
    </location>
</feature>
<feature type="repeat" description="3">
    <location>
        <begin position="115"/>
        <end position="127"/>
    </location>
</feature>
<feature type="repeat" description="4">
    <location>
        <begin position="141"/>
        <end position="153"/>
    </location>
</feature>
<feature type="repeat" description="5">
    <location>
        <begin position="160"/>
        <end position="172"/>
    </location>
</feature>
<feature type="repeat" description="6">
    <location>
        <begin position="179"/>
        <end position="191"/>
    </location>
</feature>
<feature type="repeat" description="7">
    <location>
        <begin position="198"/>
        <end position="210"/>
    </location>
</feature>
<feature type="region of interest" description="7 X 13 AA repeats of [GW]-X-X-[MLP]-X-X-G-X-[IL]-X-[IV]-X-G">
    <location>
        <begin position="77"/>
        <end position="210"/>
    </location>
</feature>
<evidence type="ECO:0000250" key="1"/>
<evidence type="ECO:0000250" key="2">
    <source>
        <dbReference type="UniProtKB" id="Q48943"/>
    </source>
</evidence>
<evidence type="ECO:0000305" key="3"/>
<proteinExistence type="inferred from homology"/>
<dbReference type="EC" id="1.2.7.12" evidence="2"/>
<dbReference type="EMBL" id="AF029842">
    <property type="protein sequence ID" value="AAB82591.1"/>
    <property type="molecule type" value="Genomic_DNA"/>
</dbReference>
<dbReference type="SMR" id="P0CW42"/>
<dbReference type="UniPathway" id="UPA00640">
    <property type="reaction ID" value="UER00692"/>
</dbReference>
<dbReference type="GO" id="GO:0018493">
    <property type="term" value="F:formylmethanofuran dehydrogenase activity"/>
    <property type="evidence" value="ECO:0007669"/>
    <property type="project" value="UniProtKB-EC"/>
</dbReference>
<dbReference type="GO" id="GO:0046914">
    <property type="term" value="F:transition metal ion binding"/>
    <property type="evidence" value="ECO:0007669"/>
    <property type="project" value="InterPro"/>
</dbReference>
<dbReference type="GO" id="GO:0019386">
    <property type="term" value="P:methanogenesis, from carbon dioxide"/>
    <property type="evidence" value="ECO:0007669"/>
    <property type="project" value="UniProtKB-UniPathway"/>
</dbReference>
<dbReference type="CDD" id="cd00980">
    <property type="entry name" value="FwdC/FmdC"/>
    <property type="match status" value="1"/>
</dbReference>
<dbReference type="Gene3D" id="2.160.20.60">
    <property type="entry name" value="Glutamate synthase, alpha subunit, C-terminal domain"/>
    <property type="match status" value="1"/>
</dbReference>
<dbReference type="InterPro" id="IPR054942">
    <property type="entry name" value="FMH_DH_FwdC"/>
</dbReference>
<dbReference type="InterPro" id="IPR017550">
    <property type="entry name" value="Formylmethanofuran_DH_suC"/>
</dbReference>
<dbReference type="InterPro" id="IPR002489">
    <property type="entry name" value="Glu_synth_asu_C"/>
</dbReference>
<dbReference type="InterPro" id="IPR036485">
    <property type="entry name" value="Glu_synth_asu_C_sf"/>
</dbReference>
<dbReference type="NCBIfam" id="NF042910">
    <property type="entry name" value="FMH_DH_FwdC"/>
    <property type="match status" value="1"/>
</dbReference>
<dbReference type="NCBIfam" id="TIGR03122">
    <property type="entry name" value="one_C_dehyd_C"/>
    <property type="match status" value="1"/>
</dbReference>
<dbReference type="PANTHER" id="PTHR39673">
    <property type="entry name" value="TUNGSTEN FORMYLMETHANOFURAN DEHYDROGENASE, SUBUNIT C (FWDC)"/>
    <property type="match status" value="1"/>
</dbReference>
<dbReference type="PANTHER" id="PTHR39673:SF5">
    <property type="entry name" value="TUNGSTEN-CONTAINING FORMYLMETHANOFURAN DEHYDROGENASE 2 SUBUNIT C"/>
    <property type="match status" value="1"/>
</dbReference>
<dbReference type="Pfam" id="PF01493">
    <property type="entry name" value="GXGXG"/>
    <property type="match status" value="1"/>
</dbReference>
<dbReference type="SUPFAM" id="SSF69336">
    <property type="entry name" value="Alpha subunit of glutamate synthase, C-terminal domain"/>
    <property type="match status" value="1"/>
</dbReference>
<comment type="function">
    <text evidence="2">Catalyzes the reversible oxidation of CO(2) and methanofuran (MFR) to N-formylmethanofuran (CHO-MFR). This enzyme is oxygen-labile.</text>
</comment>
<comment type="catalytic activity">
    <reaction evidence="2">
        <text>N-formylmethanofuran + 2 oxidized [2Fe-2S]-[ferredoxin] + H2O = methanofuran + 2 reduced [2Fe-2S]-[ferredoxin] + CO2 + H(+)</text>
        <dbReference type="Rhea" id="RHEA:19841"/>
        <dbReference type="Rhea" id="RHEA-COMP:10000"/>
        <dbReference type="Rhea" id="RHEA-COMP:10001"/>
        <dbReference type="ChEBI" id="CHEBI:15377"/>
        <dbReference type="ChEBI" id="CHEBI:15378"/>
        <dbReference type="ChEBI" id="CHEBI:16526"/>
        <dbReference type="ChEBI" id="CHEBI:33737"/>
        <dbReference type="ChEBI" id="CHEBI:33738"/>
        <dbReference type="ChEBI" id="CHEBI:57727"/>
        <dbReference type="ChEBI" id="CHEBI:58151"/>
        <dbReference type="EC" id="1.2.7.12"/>
    </reaction>
</comment>
<comment type="pathway">
    <text>One-carbon metabolism; methanogenesis from CO(2); 5,10-methenyl-5,6,7,8-tetrahydromethanopterin from CO(2): step 1/3.</text>
</comment>
<comment type="subunit">
    <text evidence="1">This enzyme is composed of seven subunits fwdA (65 kDa), fwdB (53 kDa), fwdC (31 kDa), fwdD (15 kDa), fwdE, fwdF and fwdG.</text>
</comment>
<comment type="similarity">
    <text evidence="3">Belongs to the FwdC/FmdC family.</text>
</comment>
<keyword id="KW-0484">Methanogenesis</keyword>
<keyword id="KW-0560">Oxidoreductase</keyword>
<keyword id="KW-0677">Repeat</keyword>
<reference key="1">
    <citation type="submission" date="1997-11" db="EMBL/GenBank/DDBJ databases">
        <authorList>
            <person name="Yu J.-P."/>
            <person name="Whitman W.B."/>
        </authorList>
    </citation>
    <scope>NUCLEOTIDE SEQUENCE [GENOMIC DNA]</scope>
    <source>
        <strain>ATCC 43000 / DSM 2067 / JCM 10722 / JJ</strain>
    </source>
</reference>
<sequence>MNELILNLKGDVSVPVEMDKIIPEKIQEMSLEKISGIELIQGNKTAKVSEIFDVELKESPVSKVTINNCCKKVKRIGEKMTSGEIVVNGDAGMYVGVEMKGGKITVNGDAESWVGQNLKGGEIIINGNAENYVGSAYRGDWRGMSGGKITITGTAGSELGEYLKGGTIVIKGNTKIMPGIHPNGGMIIIEGDIEGRAGGEMMKGAIVVYGKTLEPLPSFKFEGIVEDPLVKLFKKDAGTQLKGTFIKFSGDYVNTKPKGQLYAAIENNKNLI</sequence>
<name>FWDC_METMI</name>
<protein>
    <recommendedName>
        <fullName>Tungsten-containing formylmethanofuran dehydrogenase 2 subunit C</fullName>
        <ecNumber evidence="2">1.2.7.12</ecNumber>
    </recommendedName>
    <alternativeName>
        <fullName>Tungsten-containing formylmethanofuran dehydrogenase II subunit C</fullName>
    </alternativeName>
</protein>
<gene>
    <name type="primary">fwdC</name>
</gene>